<proteinExistence type="evidence at transcript level"/>
<protein>
    <recommendedName>
        <fullName>Kunitz-type serine protease inhibitor kunitoxin-Phi1</fullName>
    </recommendedName>
</protein>
<keyword id="KW-1015">Disulfide bond</keyword>
<keyword id="KW-0646">Protease inhibitor</keyword>
<keyword id="KW-0964">Secreted</keyword>
<keyword id="KW-0722">Serine protease inhibitor</keyword>
<keyword id="KW-0732">Signal</keyword>
<organism>
    <name type="scientific">Philodryas olfersii</name>
    <name type="common">Green snake</name>
    <dbReference type="NCBI Taxonomy" id="120305"/>
    <lineage>
        <taxon>Eukaryota</taxon>
        <taxon>Metazoa</taxon>
        <taxon>Chordata</taxon>
        <taxon>Craniata</taxon>
        <taxon>Vertebrata</taxon>
        <taxon>Euteleostomi</taxon>
        <taxon>Lepidosauria</taxon>
        <taxon>Squamata</taxon>
        <taxon>Bifurcata</taxon>
        <taxon>Unidentata</taxon>
        <taxon>Episquamata</taxon>
        <taxon>Toxicofera</taxon>
        <taxon>Serpentes</taxon>
        <taxon>Colubroidea</taxon>
        <taxon>Dipsadidae</taxon>
        <taxon>Philodryas</taxon>
    </lineage>
</organism>
<dbReference type="EMBL" id="EU029688">
    <property type="protein sequence ID" value="ABU68488.1"/>
    <property type="molecule type" value="mRNA"/>
</dbReference>
<dbReference type="SMR" id="A7X3V7"/>
<dbReference type="MEROPS" id="I02.022"/>
<dbReference type="GO" id="GO:0005615">
    <property type="term" value="C:extracellular space"/>
    <property type="evidence" value="ECO:0007669"/>
    <property type="project" value="TreeGrafter"/>
</dbReference>
<dbReference type="GO" id="GO:0004867">
    <property type="term" value="F:serine-type endopeptidase inhibitor activity"/>
    <property type="evidence" value="ECO:0007669"/>
    <property type="project" value="UniProtKB-KW"/>
</dbReference>
<dbReference type="CDD" id="cd00109">
    <property type="entry name" value="Kunitz-type"/>
    <property type="match status" value="1"/>
</dbReference>
<dbReference type="FunFam" id="4.10.410.10:FF:000004">
    <property type="entry name" value="Tissue factor pathway inhibitor"/>
    <property type="match status" value="1"/>
</dbReference>
<dbReference type="Gene3D" id="4.10.410.10">
    <property type="entry name" value="Pancreatic trypsin inhibitor Kunitz domain"/>
    <property type="match status" value="1"/>
</dbReference>
<dbReference type="InterPro" id="IPR002223">
    <property type="entry name" value="Kunitz_BPTI"/>
</dbReference>
<dbReference type="InterPro" id="IPR036880">
    <property type="entry name" value="Kunitz_BPTI_sf"/>
</dbReference>
<dbReference type="InterPro" id="IPR020901">
    <property type="entry name" value="Prtase_inh_Kunz-CS"/>
</dbReference>
<dbReference type="InterPro" id="IPR050098">
    <property type="entry name" value="TFPI/VKTCI-like"/>
</dbReference>
<dbReference type="PANTHER" id="PTHR10083:SF374">
    <property type="entry name" value="BPTI_KUNITZ INHIBITOR DOMAIN-CONTAINING PROTEIN"/>
    <property type="match status" value="1"/>
</dbReference>
<dbReference type="PANTHER" id="PTHR10083">
    <property type="entry name" value="KUNITZ-TYPE PROTEASE INHIBITOR-RELATED"/>
    <property type="match status" value="1"/>
</dbReference>
<dbReference type="Pfam" id="PF00014">
    <property type="entry name" value="Kunitz_BPTI"/>
    <property type="match status" value="1"/>
</dbReference>
<dbReference type="PRINTS" id="PR00759">
    <property type="entry name" value="BASICPTASE"/>
</dbReference>
<dbReference type="SMART" id="SM00131">
    <property type="entry name" value="KU"/>
    <property type="match status" value="1"/>
</dbReference>
<dbReference type="SUPFAM" id="SSF57362">
    <property type="entry name" value="BPTI-like"/>
    <property type="match status" value="1"/>
</dbReference>
<dbReference type="PROSITE" id="PS00280">
    <property type="entry name" value="BPTI_KUNITZ_1"/>
    <property type="match status" value="1"/>
</dbReference>
<dbReference type="PROSITE" id="PS50279">
    <property type="entry name" value="BPTI_KUNITZ_2"/>
    <property type="match status" value="1"/>
</dbReference>
<feature type="signal peptide" evidence="1">
    <location>
        <begin position="1"/>
        <end position="23"/>
    </location>
</feature>
<feature type="chain" id="PRO_0000377475" description="Kunitz-type serine protease inhibitor kunitoxin-Phi1">
    <location>
        <begin position="24"/>
        <end position="98"/>
    </location>
</feature>
<feature type="domain" description="BPTI/Kunitz inhibitor" evidence="2">
    <location>
        <begin position="39"/>
        <end position="89"/>
    </location>
</feature>
<feature type="site" description="Reactive bond for chymotrypsin" evidence="1">
    <location>
        <begin position="49"/>
        <end position="50"/>
    </location>
</feature>
<feature type="disulfide bond" evidence="2">
    <location>
        <begin position="39"/>
        <end position="89"/>
    </location>
</feature>
<feature type="disulfide bond" evidence="2">
    <location>
        <begin position="48"/>
        <end position="72"/>
    </location>
</feature>
<feature type="disulfide bond" evidence="2">
    <location>
        <begin position="64"/>
        <end position="85"/>
    </location>
</feature>
<reference key="1">
    <citation type="journal article" date="2008" name="Mol. Cell. Proteomics">
        <title>Evolution of an arsenal: structural and functional diversification of the venom system in the advanced snakes (Caenophidia).</title>
        <authorList>
            <person name="Fry B.G."/>
            <person name="Scheib H."/>
            <person name="van der Weerd L."/>
            <person name="Young B."/>
            <person name="McNaughtan J."/>
            <person name="Ramjan S.F.R."/>
            <person name="Vidal N."/>
            <person name="Poelmann R.E."/>
            <person name="Norman J.A."/>
        </authorList>
    </citation>
    <scope>NUCLEOTIDE SEQUENCE [MRNA]</scope>
    <source>
        <tissue>Venom gland</tissue>
    </source>
</reference>
<accession>A7X3V7</accession>
<name>VKT1_PHIOL</name>
<evidence type="ECO:0000250" key="1"/>
<evidence type="ECO:0000255" key="2">
    <source>
        <dbReference type="PROSITE-ProRule" id="PRU00031"/>
    </source>
</evidence>
<evidence type="ECO:0000305" key="3"/>
<sequence>MWARVLLLGVLLSLLADLHAASGGDAGGQKTWNPRISDCELPPEKGPCNNLELRWFYNLKSKRCERFFYGGCYGNANNFKEINECDRRCVSPDINKPG</sequence>
<comment type="function">
    <text evidence="1">Serine protease inhibitor.</text>
</comment>
<comment type="subcellular location">
    <subcellularLocation>
        <location evidence="1">Secreted</location>
    </subcellularLocation>
</comment>
<comment type="tissue specificity">
    <text>Expressed by the venom gland.</text>
</comment>
<comment type="similarity">
    <text evidence="3">Belongs to the venom Kunitz-type family.</text>
</comment>